<reference key="1">
    <citation type="journal article" date="2002" name="Nature">
        <title>The genome sequence of Schizosaccharomyces pombe.</title>
        <authorList>
            <person name="Wood V."/>
            <person name="Gwilliam R."/>
            <person name="Rajandream M.A."/>
            <person name="Lyne M.H."/>
            <person name="Lyne R."/>
            <person name="Stewart A."/>
            <person name="Sgouros J.G."/>
            <person name="Peat N."/>
            <person name="Hayles J."/>
            <person name="Baker S.G."/>
            <person name="Basham D."/>
            <person name="Bowman S."/>
            <person name="Brooks K."/>
            <person name="Brown D."/>
            <person name="Brown S."/>
            <person name="Chillingworth T."/>
            <person name="Churcher C.M."/>
            <person name="Collins M."/>
            <person name="Connor R."/>
            <person name="Cronin A."/>
            <person name="Davis P."/>
            <person name="Feltwell T."/>
            <person name="Fraser A."/>
            <person name="Gentles S."/>
            <person name="Goble A."/>
            <person name="Hamlin N."/>
            <person name="Harris D.E."/>
            <person name="Hidalgo J."/>
            <person name="Hodgson G."/>
            <person name="Holroyd S."/>
            <person name="Hornsby T."/>
            <person name="Howarth S."/>
            <person name="Huckle E.J."/>
            <person name="Hunt S."/>
            <person name="Jagels K."/>
            <person name="James K.D."/>
            <person name="Jones L."/>
            <person name="Jones M."/>
            <person name="Leather S."/>
            <person name="McDonald S."/>
            <person name="McLean J."/>
            <person name="Mooney P."/>
            <person name="Moule S."/>
            <person name="Mungall K.L."/>
            <person name="Murphy L.D."/>
            <person name="Niblett D."/>
            <person name="Odell C."/>
            <person name="Oliver K."/>
            <person name="O'Neil S."/>
            <person name="Pearson D."/>
            <person name="Quail M.A."/>
            <person name="Rabbinowitsch E."/>
            <person name="Rutherford K.M."/>
            <person name="Rutter S."/>
            <person name="Saunders D."/>
            <person name="Seeger K."/>
            <person name="Sharp S."/>
            <person name="Skelton J."/>
            <person name="Simmonds M.N."/>
            <person name="Squares R."/>
            <person name="Squares S."/>
            <person name="Stevens K."/>
            <person name="Taylor K."/>
            <person name="Taylor R.G."/>
            <person name="Tivey A."/>
            <person name="Walsh S.V."/>
            <person name="Warren T."/>
            <person name="Whitehead S."/>
            <person name="Woodward J.R."/>
            <person name="Volckaert G."/>
            <person name="Aert R."/>
            <person name="Robben J."/>
            <person name="Grymonprez B."/>
            <person name="Weltjens I."/>
            <person name="Vanstreels E."/>
            <person name="Rieger M."/>
            <person name="Schaefer M."/>
            <person name="Mueller-Auer S."/>
            <person name="Gabel C."/>
            <person name="Fuchs M."/>
            <person name="Duesterhoeft A."/>
            <person name="Fritzc C."/>
            <person name="Holzer E."/>
            <person name="Moestl D."/>
            <person name="Hilbert H."/>
            <person name="Borzym K."/>
            <person name="Langer I."/>
            <person name="Beck A."/>
            <person name="Lehrach H."/>
            <person name="Reinhardt R."/>
            <person name="Pohl T.M."/>
            <person name="Eger P."/>
            <person name="Zimmermann W."/>
            <person name="Wedler H."/>
            <person name="Wambutt R."/>
            <person name="Purnelle B."/>
            <person name="Goffeau A."/>
            <person name="Cadieu E."/>
            <person name="Dreano S."/>
            <person name="Gloux S."/>
            <person name="Lelaure V."/>
            <person name="Mottier S."/>
            <person name="Galibert F."/>
            <person name="Aves S.J."/>
            <person name="Xiang Z."/>
            <person name="Hunt C."/>
            <person name="Moore K."/>
            <person name="Hurst S.M."/>
            <person name="Lucas M."/>
            <person name="Rochet M."/>
            <person name="Gaillardin C."/>
            <person name="Tallada V.A."/>
            <person name="Garzon A."/>
            <person name="Thode G."/>
            <person name="Daga R.R."/>
            <person name="Cruzado L."/>
            <person name="Jimenez J."/>
            <person name="Sanchez M."/>
            <person name="del Rey F."/>
            <person name="Benito J."/>
            <person name="Dominguez A."/>
            <person name="Revuelta J.L."/>
            <person name="Moreno S."/>
            <person name="Armstrong J."/>
            <person name="Forsburg S.L."/>
            <person name="Cerutti L."/>
            <person name="Lowe T."/>
            <person name="McCombie W.R."/>
            <person name="Paulsen I."/>
            <person name="Potashkin J."/>
            <person name="Shpakovski G.V."/>
            <person name="Ussery D."/>
            <person name="Barrell B.G."/>
            <person name="Nurse P."/>
        </authorList>
    </citation>
    <scope>NUCLEOTIDE SEQUENCE [LARGE SCALE GENOMIC DNA]</scope>
    <source>
        <strain>972 / ATCC 24843</strain>
    </source>
</reference>
<reference key="2">
    <citation type="journal article" date="2004" name="Yeast">
        <title>Identification of genes encoding putative nucleoporins and transport factors in the fission yeast Schizosaccharomyces pombe: a deletion analysis.</title>
        <authorList>
            <person name="Chen X.Q."/>
            <person name="Du X."/>
            <person name="Liu J."/>
            <person name="Balasubramanian M.K."/>
            <person name="Balasundaram D."/>
        </authorList>
    </citation>
    <scope>FUNCTION</scope>
    <scope>SUBCELLULAR LOCATION</scope>
</reference>
<reference key="3">
    <citation type="journal article" date="2006" name="Nat. Biotechnol.">
        <title>ORFeome cloning and global analysis of protein localization in the fission yeast Schizosaccharomyces pombe.</title>
        <authorList>
            <person name="Matsuyama A."/>
            <person name="Arai R."/>
            <person name="Yashiroda Y."/>
            <person name="Shirai A."/>
            <person name="Kamata A."/>
            <person name="Sekido S."/>
            <person name="Kobayashi Y."/>
            <person name="Hashimoto A."/>
            <person name="Hamamoto M."/>
            <person name="Hiraoka Y."/>
            <person name="Horinouchi S."/>
            <person name="Yoshida M."/>
        </authorList>
    </citation>
    <scope>SUBCELLULAR LOCATION [LARGE SCALE ANALYSIS]</scope>
</reference>
<keyword id="KW-0509">mRNA transport</keyword>
<keyword id="KW-0539">Nucleus</keyword>
<keyword id="KW-1185">Reference proteome</keyword>
<keyword id="KW-0813">Transport</keyword>
<organism>
    <name type="scientific">Schizosaccharomyces pombe (strain 972 / ATCC 24843)</name>
    <name type="common">Fission yeast</name>
    <dbReference type="NCBI Taxonomy" id="284812"/>
    <lineage>
        <taxon>Eukaryota</taxon>
        <taxon>Fungi</taxon>
        <taxon>Dikarya</taxon>
        <taxon>Ascomycota</taxon>
        <taxon>Taphrinomycotina</taxon>
        <taxon>Schizosaccharomycetes</taxon>
        <taxon>Schizosaccharomycetales</taxon>
        <taxon>Schizosaccharomycetaceae</taxon>
        <taxon>Schizosaccharomyces</taxon>
    </lineage>
</organism>
<proteinExistence type="inferred from homology"/>
<dbReference type="EMBL" id="CU329672">
    <property type="protein sequence ID" value="CAA22859.1"/>
    <property type="molecule type" value="Genomic_DNA"/>
</dbReference>
<dbReference type="PIR" id="T40937">
    <property type="entry name" value="T40937"/>
</dbReference>
<dbReference type="RefSeq" id="NP_588134.1">
    <property type="nucleotide sequence ID" value="NM_001023124.2"/>
</dbReference>
<dbReference type="SMR" id="O94545"/>
<dbReference type="BioGRID" id="275381">
    <property type="interactions" value="40"/>
</dbReference>
<dbReference type="FunCoup" id="O94545">
    <property type="interactions" value="676"/>
</dbReference>
<dbReference type="STRING" id="284812.O94545"/>
<dbReference type="PaxDb" id="4896-SPCC1322.06.1"/>
<dbReference type="EnsemblFungi" id="SPCC1322.06.1">
    <property type="protein sequence ID" value="SPCC1322.06.1:pep"/>
    <property type="gene ID" value="SPCC1322.06"/>
</dbReference>
<dbReference type="GeneID" id="2538800"/>
<dbReference type="KEGG" id="spo:2538800"/>
<dbReference type="PomBase" id="SPCC1322.06">
    <property type="gene designation" value="kap113"/>
</dbReference>
<dbReference type="VEuPathDB" id="FungiDB:SPCC1322.06"/>
<dbReference type="eggNOG" id="KOG1993">
    <property type="taxonomic scope" value="Eukaryota"/>
</dbReference>
<dbReference type="HOGENOM" id="CLU_003886_0_0_1"/>
<dbReference type="InParanoid" id="O94545"/>
<dbReference type="OMA" id="SFHYVFH"/>
<dbReference type="PhylomeDB" id="O94545"/>
<dbReference type="PRO" id="PR:O94545"/>
<dbReference type="Proteomes" id="UP000002485">
    <property type="component" value="Chromosome III"/>
</dbReference>
<dbReference type="GO" id="GO:0005829">
    <property type="term" value="C:cytosol"/>
    <property type="evidence" value="ECO:0000318"/>
    <property type="project" value="GO_Central"/>
</dbReference>
<dbReference type="GO" id="GO:0005635">
    <property type="term" value="C:nuclear envelope"/>
    <property type="evidence" value="ECO:0007005"/>
    <property type="project" value="PomBase"/>
</dbReference>
<dbReference type="GO" id="GO:0034399">
    <property type="term" value="C:nuclear periphery"/>
    <property type="evidence" value="ECO:0000314"/>
    <property type="project" value="PomBase"/>
</dbReference>
<dbReference type="GO" id="GO:0005634">
    <property type="term" value="C:nucleus"/>
    <property type="evidence" value="ECO:0007005"/>
    <property type="project" value="PomBase"/>
</dbReference>
<dbReference type="GO" id="GO:0061608">
    <property type="term" value="F:nuclear import signal receptor activity"/>
    <property type="evidence" value="ECO:0000266"/>
    <property type="project" value="PomBase"/>
</dbReference>
<dbReference type="GO" id="GO:0031267">
    <property type="term" value="F:small GTPase binding"/>
    <property type="evidence" value="ECO:0007669"/>
    <property type="project" value="InterPro"/>
</dbReference>
<dbReference type="GO" id="GO:0016973">
    <property type="term" value="P:poly(A)+ mRNA export from nucleus"/>
    <property type="evidence" value="ECO:0000315"/>
    <property type="project" value="PomBase"/>
</dbReference>
<dbReference type="GO" id="GO:0006606">
    <property type="term" value="P:protein import into nucleus"/>
    <property type="evidence" value="ECO:0000318"/>
    <property type="project" value="GO_Central"/>
</dbReference>
<dbReference type="Gene3D" id="1.25.10.10">
    <property type="entry name" value="Leucine-rich Repeat Variant"/>
    <property type="match status" value="1"/>
</dbReference>
<dbReference type="InterPro" id="IPR011989">
    <property type="entry name" value="ARM-like"/>
</dbReference>
<dbReference type="InterPro" id="IPR016024">
    <property type="entry name" value="ARM-type_fold"/>
</dbReference>
<dbReference type="InterPro" id="IPR013598">
    <property type="entry name" value="Exportin-1/Importin-b-like"/>
</dbReference>
<dbReference type="InterPro" id="IPR001494">
    <property type="entry name" value="Importin-beta_N"/>
</dbReference>
<dbReference type="PANTHER" id="PTHR10997:SF7">
    <property type="entry name" value="IMPORTIN-11"/>
    <property type="match status" value="1"/>
</dbReference>
<dbReference type="PANTHER" id="PTHR10997">
    <property type="entry name" value="IMPORTIN-7, 8, 11"/>
    <property type="match status" value="1"/>
</dbReference>
<dbReference type="Pfam" id="PF03810">
    <property type="entry name" value="IBN_N"/>
    <property type="match status" value="1"/>
</dbReference>
<dbReference type="Pfam" id="PF08389">
    <property type="entry name" value="Xpo1"/>
    <property type="match status" value="1"/>
</dbReference>
<dbReference type="SMART" id="SM00913">
    <property type="entry name" value="IBN_N"/>
    <property type="match status" value="1"/>
</dbReference>
<dbReference type="SUPFAM" id="SSF48371">
    <property type="entry name" value="ARM repeat"/>
    <property type="match status" value="1"/>
</dbReference>
<dbReference type="PROSITE" id="PS50166">
    <property type="entry name" value="IMPORTIN_B_NT"/>
    <property type="match status" value="1"/>
</dbReference>
<gene>
    <name type="primary">kap113</name>
    <name type="ORF">SPCC1322.06</name>
</gene>
<feature type="chain" id="PRO_0000290666" description="Importin beta-like protein kap113">
    <location>
        <begin position="1"/>
        <end position="983"/>
    </location>
</feature>
<feature type="domain" description="Importin N-terminal" evidence="1">
    <location>
        <begin position="24"/>
        <end position="96"/>
    </location>
</feature>
<accession>O94545</accession>
<name>KA113_SCHPO</name>
<evidence type="ECO:0000255" key="1">
    <source>
        <dbReference type="PROSITE-ProRule" id="PRU00115"/>
    </source>
</evidence>
<evidence type="ECO:0000269" key="2">
    <source>
    </source>
</evidence>
<evidence type="ECO:0000269" key="3">
    <source>
    </source>
</evidence>
<evidence type="ECO:0000305" key="4"/>
<comment type="function">
    <text evidence="2">Functions as a component of the nuclear pore complex (NPC). NPC components, collectively referred to as nucleoporins (NUPs), can play the role of both NPC structural components and of docking or interaction partners for transiently associated nuclear transport factors. Active directional transport is assured by both, a Phe-Gly (FG) repeat affinity gradient for these transport factors across the NPC and a transport cofactor concentration gradient across the nuclear envelope. Involved in the export of mRNA from the nucleus to the cytoplasm. May play a role in mitotic spindle formation and/or function.</text>
</comment>
<comment type="subcellular location">
    <subcellularLocation>
        <location evidence="2 3">Nucleus</location>
    </subcellularLocation>
    <text>Nuclear rim.</text>
</comment>
<comment type="similarity">
    <text evidence="4">Belongs to the importin beta family.</text>
</comment>
<sequence length="983" mass="112935">MQVDPVVYQLQRAVSQDPIAVKDAEGHLNNWKKEPGFFGKLYSIFLDKQNDMSLRWIAIIQLRNSIDIIWRKNTKMSLLPEERDFIRCNALLGSIKSENLLSIQNALVVSRIARLDYPTEWPSLFHDLLGKLQQSLGTGDYDVALRLLITLHHIIKAMAGNRLLRSRQIFYKLAPELLTILQPILHSSLSSWMMILESSKEIKDSTLLSYMQISRYTLKACRRLVVFGFQNPSESEFSERMLAFCAVHQRKLLSMLGTMLQSSRSPIVVGECLEMAFAHAFLFNKPFFDFSFYSPCLTKFPATIDYISLHYDFLGQISSHLSSYKEKFEESSKNFEKLVIMSLRVFILVIQEFCNTKSSHPETAQVLYNSFLVDNRINNLLDLLITKLLILKEEDFEEWTDSPQQWVLEQSTQDVEFNVRPCAEKLLKCFFDAYGDIIVSPFKDMIYSVFECPKTLTQAVQQDTLISSFGVGYTQLKSIFPFAKWLQEAAVPNMASINDIGISRVYRRRIAIFLSQWIEDSSSEQLLEVIYKLYCSFLNLTDPCNDAVVILTTIDAFKTVLDDWNFSENSFLSIKENLFVHVLSLFKAFESVDARTSILSLLGTLLARAGEHVAPMESTIASLLSQLWDGWKKEPLLRARVLAVMHQFVNAIKAKSFEFSTFLYTVIEYCVNPESPEHVIFEADAMELWSTFLMYIQKLPETFTLLIPHLLYHLSQATSTLPFVLMIVSSYQLLDNTVLMKDYSFTIFEKLNDLLDDVKNETLQALCKTVCLLIETTPMDMIYESLLNSSLLSRLLLSIATNDKHPQVLIEYLLVVSRISLREPELILKVCQTKNINIAMLIGNWILLNDHINHSKDRKLNTLALSSLLRTNHPDVLAVLDSIMNLWFSVLSEVEEDANGDATIYYKNDDYSAVGFYLDETSEEMTRRKQLLLKDPVHSVNSRSFFISVFMFCRDANGGMENFQNQYLSTVNPALLEQFQSML</sequence>
<protein>
    <recommendedName>
        <fullName>Importin beta-like protein kap113</fullName>
    </recommendedName>
    <alternativeName>
        <fullName>Karyopherin-113</fullName>
    </alternativeName>
</protein>